<sequence length="324" mass="36936">MARAKAVDFFSTKNNSSDSEEEEDKPAVDPRFVLADSDSEGEEEQEDGDEDEEEKGRTSKKKTKDFFELAGKTDDGDDEEEDEEDEEEEEEEKEKKPVKTSSTKAKTKPMTKEEIEKHNKKIAKTGVVYFSRIPPLMDPGKLRMLLQRFGIVDRIYLVPEDPKAQAVRIRHGGNRALAYTEGWAEFTKKRYAKTCASTLNGNTIGGKKGSQHYDDIMNAKYLPKFKWSDLSEQLAQETHNRQARLRTEISQATRENQTYIQSLEKSKAAERRRQRQEEEGGETEEKPAKKVHRDFYQGKTHSARAKEGKKELDGSVGSILGSVM</sequence>
<keyword id="KW-0539">Nucleus</keyword>
<keyword id="KW-1185">Reference proteome</keyword>
<keyword id="KW-0690">Ribosome biogenesis</keyword>
<keyword id="KW-0694">RNA-binding</keyword>
<keyword id="KW-0698">rRNA processing</keyword>
<feature type="chain" id="PRO_0000285381" description="Pre-rRNA-processing protein ESF2">
    <location>
        <begin position="1"/>
        <end position="324"/>
    </location>
</feature>
<feature type="domain" description="RRM">
    <location>
        <begin position="126"/>
        <end position="216"/>
    </location>
</feature>
<feature type="region of interest" description="Disordered" evidence="2">
    <location>
        <begin position="1"/>
        <end position="116"/>
    </location>
</feature>
<feature type="region of interest" description="Disordered" evidence="2">
    <location>
        <begin position="248"/>
        <end position="324"/>
    </location>
</feature>
<feature type="compositionally biased region" description="Acidic residues" evidence="2">
    <location>
        <begin position="37"/>
        <end position="53"/>
    </location>
</feature>
<feature type="compositionally biased region" description="Basic and acidic residues" evidence="2">
    <location>
        <begin position="64"/>
        <end position="74"/>
    </location>
</feature>
<feature type="compositionally biased region" description="Acidic residues" evidence="2">
    <location>
        <begin position="75"/>
        <end position="92"/>
    </location>
</feature>
<feature type="compositionally biased region" description="Polar residues" evidence="2">
    <location>
        <begin position="248"/>
        <end position="263"/>
    </location>
</feature>
<feature type="compositionally biased region" description="Basic and acidic residues" evidence="2">
    <location>
        <begin position="264"/>
        <end position="296"/>
    </location>
</feature>
<feature type="compositionally biased region" description="Basic and acidic residues" evidence="2">
    <location>
        <begin position="304"/>
        <end position="313"/>
    </location>
</feature>
<gene>
    <name type="primary">ESF2</name>
    <name type="ordered locus">YALI0B04136g</name>
</gene>
<dbReference type="EMBL" id="CR382128">
    <property type="protein sequence ID" value="CAG82708.1"/>
    <property type="molecule type" value="Genomic_DNA"/>
</dbReference>
<dbReference type="RefSeq" id="XP_500481.1">
    <property type="nucleotide sequence ID" value="XM_500481.1"/>
</dbReference>
<dbReference type="SMR" id="Q6CFT1"/>
<dbReference type="FunCoup" id="Q6CFT1">
    <property type="interactions" value="965"/>
</dbReference>
<dbReference type="STRING" id="284591.Q6CFT1"/>
<dbReference type="EnsemblFungi" id="CAG82708">
    <property type="protein sequence ID" value="CAG82708"/>
    <property type="gene ID" value="YALI0_B04136g"/>
</dbReference>
<dbReference type="KEGG" id="yli:2907052"/>
<dbReference type="VEuPathDB" id="FungiDB:YALI0_B04136g"/>
<dbReference type="HOGENOM" id="CLU_054086_0_0_1"/>
<dbReference type="InParanoid" id="Q6CFT1"/>
<dbReference type="OMA" id="TRKHNDF"/>
<dbReference type="OrthoDB" id="120413at4891"/>
<dbReference type="Proteomes" id="UP000001300">
    <property type="component" value="Chromosome B"/>
</dbReference>
<dbReference type="GO" id="GO:0005730">
    <property type="term" value="C:nucleolus"/>
    <property type="evidence" value="ECO:0000318"/>
    <property type="project" value="GO_Central"/>
</dbReference>
<dbReference type="GO" id="GO:0032040">
    <property type="term" value="C:small-subunit processome"/>
    <property type="evidence" value="ECO:0007669"/>
    <property type="project" value="EnsemblFungi"/>
</dbReference>
<dbReference type="GO" id="GO:0001671">
    <property type="term" value="F:ATPase activator activity"/>
    <property type="evidence" value="ECO:0007669"/>
    <property type="project" value="EnsemblFungi"/>
</dbReference>
<dbReference type="GO" id="GO:0003723">
    <property type="term" value="F:RNA binding"/>
    <property type="evidence" value="ECO:0000318"/>
    <property type="project" value="GO_Central"/>
</dbReference>
<dbReference type="GO" id="GO:0000480">
    <property type="term" value="P:endonucleolytic cleavage in 5'-ETS of tricistronic rRNA transcript (SSU-rRNA, 5.8S rRNA, LSU-rRNA)"/>
    <property type="evidence" value="ECO:0000318"/>
    <property type="project" value="GO_Central"/>
</dbReference>
<dbReference type="GO" id="GO:0000447">
    <property type="term" value="P:endonucleolytic cleavage in ITS1 to separate SSU-rRNA from 5.8S rRNA and LSU-rRNA from tricistronic rRNA transcript (SSU-rRNA, 5.8S rRNA, LSU-rRNA)"/>
    <property type="evidence" value="ECO:0000318"/>
    <property type="project" value="GO_Central"/>
</dbReference>
<dbReference type="GO" id="GO:0000472">
    <property type="term" value="P:endonucleolytic cleavage to generate mature 5'-end of SSU-rRNA from (SSU-rRNA, 5.8S rRNA, LSU-rRNA)"/>
    <property type="evidence" value="ECO:0000318"/>
    <property type="project" value="GO_Central"/>
</dbReference>
<dbReference type="GO" id="GO:0034462">
    <property type="term" value="P:small-subunit processome assembly"/>
    <property type="evidence" value="ECO:0000318"/>
    <property type="project" value="GO_Central"/>
</dbReference>
<dbReference type="CDD" id="cd12263">
    <property type="entry name" value="RRM_ABT1_like"/>
    <property type="match status" value="1"/>
</dbReference>
<dbReference type="Gene3D" id="3.30.70.330">
    <property type="match status" value="1"/>
</dbReference>
<dbReference type="InterPro" id="IPR039119">
    <property type="entry name" value="ABT1/Esf2"/>
</dbReference>
<dbReference type="InterPro" id="IPR034353">
    <property type="entry name" value="ABT1/ESF2_RRM"/>
</dbReference>
<dbReference type="InterPro" id="IPR012677">
    <property type="entry name" value="Nucleotide-bd_a/b_plait_sf"/>
</dbReference>
<dbReference type="InterPro" id="IPR035979">
    <property type="entry name" value="RBD_domain_sf"/>
</dbReference>
<dbReference type="PANTHER" id="PTHR12311">
    <property type="entry name" value="ACTIVATOR OF BASAL TRANSCRIPTION 1"/>
    <property type="match status" value="1"/>
</dbReference>
<dbReference type="PANTHER" id="PTHR12311:SF7">
    <property type="entry name" value="ACTIVATOR OF BASAL TRANSCRIPTION 1"/>
    <property type="match status" value="1"/>
</dbReference>
<dbReference type="SUPFAM" id="SSF54928">
    <property type="entry name" value="RNA-binding domain, RBD"/>
    <property type="match status" value="1"/>
</dbReference>
<organism>
    <name type="scientific">Yarrowia lipolytica (strain CLIB 122 / E 150)</name>
    <name type="common">Yeast</name>
    <name type="synonym">Candida lipolytica</name>
    <dbReference type="NCBI Taxonomy" id="284591"/>
    <lineage>
        <taxon>Eukaryota</taxon>
        <taxon>Fungi</taxon>
        <taxon>Dikarya</taxon>
        <taxon>Ascomycota</taxon>
        <taxon>Saccharomycotina</taxon>
        <taxon>Dipodascomycetes</taxon>
        <taxon>Dipodascales</taxon>
        <taxon>Dipodascales incertae sedis</taxon>
        <taxon>Yarrowia</taxon>
    </lineage>
</organism>
<reference key="1">
    <citation type="journal article" date="2004" name="Nature">
        <title>Genome evolution in yeasts.</title>
        <authorList>
            <person name="Dujon B."/>
            <person name="Sherman D."/>
            <person name="Fischer G."/>
            <person name="Durrens P."/>
            <person name="Casaregola S."/>
            <person name="Lafontaine I."/>
            <person name="de Montigny J."/>
            <person name="Marck C."/>
            <person name="Neuveglise C."/>
            <person name="Talla E."/>
            <person name="Goffard N."/>
            <person name="Frangeul L."/>
            <person name="Aigle M."/>
            <person name="Anthouard V."/>
            <person name="Babour A."/>
            <person name="Barbe V."/>
            <person name="Barnay S."/>
            <person name="Blanchin S."/>
            <person name="Beckerich J.-M."/>
            <person name="Beyne E."/>
            <person name="Bleykasten C."/>
            <person name="Boisrame A."/>
            <person name="Boyer J."/>
            <person name="Cattolico L."/>
            <person name="Confanioleri F."/>
            <person name="de Daruvar A."/>
            <person name="Despons L."/>
            <person name="Fabre E."/>
            <person name="Fairhead C."/>
            <person name="Ferry-Dumazet H."/>
            <person name="Groppi A."/>
            <person name="Hantraye F."/>
            <person name="Hennequin C."/>
            <person name="Jauniaux N."/>
            <person name="Joyet P."/>
            <person name="Kachouri R."/>
            <person name="Kerrest A."/>
            <person name="Koszul R."/>
            <person name="Lemaire M."/>
            <person name="Lesur I."/>
            <person name="Ma L."/>
            <person name="Muller H."/>
            <person name="Nicaud J.-M."/>
            <person name="Nikolski M."/>
            <person name="Oztas S."/>
            <person name="Ozier-Kalogeropoulos O."/>
            <person name="Pellenz S."/>
            <person name="Potier S."/>
            <person name="Richard G.-F."/>
            <person name="Straub M.-L."/>
            <person name="Suleau A."/>
            <person name="Swennen D."/>
            <person name="Tekaia F."/>
            <person name="Wesolowski-Louvel M."/>
            <person name="Westhof E."/>
            <person name="Wirth B."/>
            <person name="Zeniou-Meyer M."/>
            <person name="Zivanovic Y."/>
            <person name="Bolotin-Fukuhara M."/>
            <person name="Thierry A."/>
            <person name="Bouchier C."/>
            <person name="Caudron B."/>
            <person name="Scarpelli C."/>
            <person name="Gaillardin C."/>
            <person name="Weissenbach J."/>
            <person name="Wincker P."/>
            <person name="Souciet J.-L."/>
        </authorList>
    </citation>
    <scope>NUCLEOTIDE SEQUENCE [LARGE SCALE GENOMIC DNA]</scope>
    <source>
        <strain>CLIB 122 / E 150</strain>
    </source>
</reference>
<evidence type="ECO:0000250" key="1"/>
<evidence type="ECO:0000256" key="2">
    <source>
        <dbReference type="SAM" id="MobiDB-lite"/>
    </source>
</evidence>
<evidence type="ECO:0000305" key="3"/>
<accession>Q6CFT1</accession>
<name>ESF2_YARLI</name>
<proteinExistence type="inferred from homology"/>
<comment type="function">
    <text evidence="1">Involved in the small subunit (SSU) processome assembly and function, and in the 18S rRNA synthesis. Required for the early cleavages at sites A0, A1 and A2 (By similarity).</text>
</comment>
<comment type="subcellular location">
    <subcellularLocation>
        <location evidence="1">Nucleus</location>
        <location evidence="1">Nucleolus</location>
    </subcellularLocation>
</comment>
<comment type="similarity">
    <text evidence="3">Belongs to the ESF2/ABP1 family.</text>
</comment>
<protein>
    <recommendedName>
        <fullName>Pre-rRNA-processing protein ESF2</fullName>
    </recommendedName>
    <alternativeName>
        <fullName>18S rRNA factor 2</fullName>
    </alternativeName>
</protein>